<evidence type="ECO:0000250" key="1"/>
<evidence type="ECO:0000269" key="2">
    <source>
    </source>
</evidence>
<evidence type="ECO:0000305" key="3"/>
<protein>
    <recommendedName>
        <fullName>KsdD-like steroid dehydrogenase MSMEG_5835</fullName>
        <ecNumber>1.3.99.-</ecNumber>
    </recommendedName>
</protein>
<sequence>MADADVIVVGAGLAGLVAACELVERGHSVIIVDQENAANIGGQAFWSFGGLFFVNSPEQRRLGIRDSQELALQDWLGTAGFDRPEDHWPREWAHAYVDFAAGEKRSWLRARGLQTFPLVGWAERGGYDALGHGNSVPRFHITWGTGPALVEIFARRIRDSVRVRFAHRHRVDELIVNAGLVAGVRGSILEPSNAPRGVASSRKVVGDFEFRASAVIVASGGIGGNLELVRKNWPARLGRVPDQLISGVPAHVDGRMIGIAESAGAHVINNDRMWHYTEGITNYDPVWPNHGIRILPGPSSLWLDANGDRLPVPLYPGYDTLGTLEHICRSGQDYTWFILNARIIAKEFALSGQEQNPDLTSRNVRDLLSRVKPGAPAPVQAFVDHGVDFVSATSLRDLVAGMNDLPDVVPLDYAKVAAEVTARDREVANRFTKDGQITAIRAARNYLGDRFTRVVAPHRLTDPKAGPLIAVKLHILTRKTLGGLETDLDSRVLKEDGTTFGGLYAAGEAAGFGGGGVHGYRSLEGTFLGGCIFSGRAAGRGAAADIA</sequence>
<organism>
    <name type="scientific">Mycolicibacterium smegmatis (strain ATCC 700084 / mc(2)155)</name>
    <name type="common">Mycobacterium smegmatis</name>
    <dbReference type="NCBI Taxonomy" id="246196"/>
    <lineage>
        <taxon>Bacteria</taxon>
        <taxon>Bacillati</taxon>
        <taxon>Actinomycetota</taxon>
        <taxon>Actinomycetes</taxon>
        <taxon>Mycobacteriales</taxon>
        <taxon>Mycobacteriaceae</taxon>
        <taxon>Mycolicibacterium</taxon>
    </lineage>
</organism>
<name>Y5835_MYCS2</name>
<comment type="function">
    <text evidence="2">Able to catalyze the elimination of the C-1 and C-2 hydrogen atoms of the A-ring from the polycyclic ring structure of 3-ketosteroids, but the ketosteroid dehydrogenase activity is low compared to KsdD in the cholesterol degradation process. The low activity could be due to different substrate specificity.</text>
</comment>
<comment type="cofactor">
    <cofactor evidence="1">
        <name>FAD</name>
        <dbReference type="ChEBI" id="CHEBI:57692"/>
    </cofactor>
</comment>
<comment type="pathway">
    <text>Lipid metabolism; steroid biosynthesis.</text>
</comment>
<comment type="disruption phenotype">
    <text evidence="2">Cells accumulate a small amount of 4-androstene-3,17-dione (AD) and 9alpha-hydroxy-4-androstene-3,17-dione (9OHAD) in the first 24-48 hours of cholesterol degradation process.</text>
</comment>
<comment type="similarity">
    <text evidence="3">Belongs to the FAD-dependent oxidoreductase 2 family.</text>
</comment>
<accession>A0R4H4</accession>
<accession>I7G8Z6</accession>
<reference key="1">
    <citation type="submission" date="2006-10" db="EMBL/GenBank/DDBJ databases">
        <authorList>
            <person name="Fleischmann R.D."/>
            <person name="Dodson R.J."/>
            <person name="Haft D.H."/>
            <person name="Merkel J.S."/>
            <person name="Nelson W.C."/>
            <person name="Fraser C.M."/>
        </authorList>
    </citation>
    <scope>NUCLEOTIDE SEQUENCE [LARGE SCALE GENOMIC DNA]</scope>
    <source>
        <strain>ATCC 700084 / mc(2)155</strain>
    </source>
</reference>
<reference key="2">
    <citation type="journal article" date="2007" name="Genome Biol.">
        <title>Interrupted coding sequences in Mycobacterium smegmatis: authentic mutations or sequencing errors?</title>
        <authorList>
            <person name="Deshayes C."/>
            <person name="Perrodou E."/>
            <person name="Gallien S."/>
            <person name="Euphrasie D."/>
            <person name="Schaeffer C."/>
            <person name="Van-Dorsselaer A."/>
            <person name="Poch O."/>
            <person name="Lecompte O."/>
            <person name="Reyrat J.-M."/>
        </authorList>
    </citation>
    <scope>NUCLEOTIDE SEQUENCE [LARGE SCALE GENOMIC DNA]</scope>
    <source>
        <strain>ATCC 700084 / mc(2)155</strain>
    </source>
</reference>
<reference key="3">
    <citation type="journal article" date="2009" name="Genome Res.">
        <title>Ortho-proteogenomics: multiple proteomes investigation through orthology and a new MS-based protocol.</title>
        <authorList>
            <person name="Gallien S."/>
            <person name="Perrodou E."/>
            <person name="Carapito C."/>
            <person name="Deshayes C."/>
            <person name="Reyrat J.-M."/>
            <person name="Van Dorsselaer A."/>
            <person name="Poch O."/>
            <person name="Schaeffer C."/>
            <person name="Lecompte O."/>
        </authorList>
    </citation>
    <scope>NUCLEOTIDE SEQUENCE [LARGE SCALE GENOMIC DNA]</scope>
    <source>
        <strain>ATCC 700084 / mc(2)155</strain>
    </source>
</reference>
<reference key="4">
    <citation type="journal article" date="2005" name="Microbiology">
        <title>Identification and targeted disruption of the gene encoding the main 3-ketosteroid dehydrogenase in Mycobacterium smegmatis.</title>
        <authorList>
            <person name="Brzostek A."/>
            <person name="Sliwinski T."/>
            <person name="Rumijowska-Galewicz A."/>
            <person name="Korycka-Machala M."/>
            <person name="Dziadek J."/>
        </authorList>
    </citation>
    <scope>FUNCTION AS A KETOSTEROID DEHYDROGENASE</scope>
    <scope>DISRUPTION PHENOTYPE</scope>
</reference>
<gene>
    <name type="ordered locus">MSMEG_5835</name>
    <name type="ordered locus">MSMEI_5677</name>
</gene>
<proteinExistence type="evidence at protein level"/>
<keyword id="KW-0274">FAD</keyword>
<keyword id="KW-0285">Flavoprotein</keyword>
<keyword id="KW-0442">Lipid degradation</keyword>
<keyword id="KW-0443">Lipid metabolism</keyword>
<keyword id="KW-0560">Oxidoreductase</keyword>
<keyword id="KW-1185">Reference proteome</keyword>
<keyword id="KW-0753">Steroid metabolism</keyword>
<dbReference type="EC" id="1.3.99.-"/>
<dbReference type="EMBL" id="CP000480">
    <property type="protein sequence ID" value="ABK72138.1"/>
    <property type="molecule type" value="Genomic_DNA"/>
</dbReference>
<dbReference type="EMBL" id="CP001663">
    <property type="protein sequence ID" value="AFP42112.1"/>
    <property type="molecule type" value="Genomic_DNA"/>
</dbReference>
<dbReference type="RefSeq" id="WP_011730832.1">
    <property type="nucleotide sequence ID" value="NZ_SIJM01000007.1"/>
</dbReference>
<dbReference type="RefSeq" id="YP_890062.1">
    <property type="nucleotide sequence ID" value="NC_008596.1"/>
</dbReference>
<dbReference type="SMR" id="A0R4H4"/>
<dbReference type="STRING" id="246196.MSMEG_5835"/>
<dbReference type="PaxDb" id="246196-MSMEI_5677"/>
<dbReference type="KEGG" id="msb:LJ00_28855"/>
<dbReference type="KEGG" id="msg:MSMEI_5677"/>
<dbReference type="KEGG" id="msm:MSMEG_5835"/>
<dbReference type="PATRIC" id="fig|246196.19.peg.5679"/>
<dbReference type="eggNOG" id="COG3573">
    <property type="taxonomic scope" value="Bacteria"/>
</dbReference>
<dbReference type="OrthoDB" id="9813348at2"/>
<dbReference type="UniPathway" id="UPA00062"/>
<dbReference type="Proteomes" id="UP000000757">
    <property type="component" value="Chromosome"/>
</dbReference>
<dbReference type="Proteomes" id="UP000006158">
    <property type="component" value="Chromosome"/>
</dbReference>
<dbReference type="GO" id="GO:0033765">
    <property type="term" value="F:steroid dehydrogenase activity, acting on the CH-CH group of donors"/>
    <property type="evidence" value="ECO:0000315"/>
    <property type="project" value="UniProtKB"/>
</dbReference>
<dbReference type="GO" id="GO:0016042">
    <property type="term" value="P:lipid catabolic process"/>
    <property type="evidence" value="ECO:0007669"/>
    <property type="project" value="UniProtKB-KW"/>
</dbReference>
<dbReference type="GO" id="GO:0006694">
    <property type="term" value="P:steroid biosynthetic process"/>
    <property type="evidence" value="ECO:0000315"/>
    <property type="project" value="UniProtKB"/>
</dbReference>
<dbReference type="Gene3D" id="3.50.50.60">
    <property type="entry name" value="FAD/NAD(P)-binding domain"/>
    <property type="match status" value="1"/>
</dbReference>
<dbReference type="Gene3D" id="3.90.700.10">
    <property type="entry name" value="Succinate dehydrogenase/fumarate reductase flavoprotein, catalytic domain"/>
    <property type="match status" value="1"/>
</dbReference>
<dbReference type="InterPro" id="IPR003953">
    <property type="entry name" value="FAD-dep_OxRdtase_2_FAD-bd"/>
</dbReference>
<dbReference type="InterPro" id="IPR036188">
    <property type="entry name" value="FAD/NAD-bd_sf"/>
</dbReference>
<dbReference type="InterPro" id="IPR014614">
    <property type="entry name" value="KsdD_DH"/>
</dbReference>
<dbReference type="InterPro" id="IPR027477">
    <property type="entry name" value="Succ_DH/fumarate_Rdtase_cat_sf"/>
</dbReference>
<dbReference type="NCBIfam" id="NF009472">
    <property type="entry name" value="PRK12834.1"/>
    <property type="match status" value="1"/>
</dbReference>
<dbReference type="PANTHER" id="PTHR43260">
    <property type="entry name" value="3-KETOSTEROID-DELTA-1-DEHYDROGENASE"/>
    <property type="match status" value="1"/>
</dbReference>
<dbReference type="PANTHER" id="PTHR43260:SF1">
    <property type="entry name" value="KSDD-LIKE STEROID DEHYDROGENASE RV0785"/>
    <property type="match status" value="1"/>
</dbReference>
<dbReference type="Pfam" id="PF00890">
    <property type="entry name" value="FAD_binding_2"/>
    <property type="match status" value="1"/>
</dbReference>
<dbReference type="PIRSF" id="PIRSF036654">
    <property type="entry name" value="UCP036654"/>
    <property type="match status" value="1"/>
</dbReference>
<dbReference type="SUPFAM" id="SSF51905">
    <property type="entry name" value="FAD/NAD(P)-binding domain"/>
    <property type="match status" value="1"/>
</dbReference>
<feature type="chain" id="PRO_0000403954" description="KsdD-like steroid dehydrogenase MSMEG_5835">
    <location>
        <begin position="1"/>
        <end position="547"/>
    </location>
</feature>
<feature type="binding site" evidence="1">
    <location>
        <begin position="5"/>
        <end position="36"/>
    </location>
    <ligand>
        <name>FAD</name>
        <dbReference type="ChEBI" id="CHEBI:57692"/>
    </ligand>
</feature>